<sequence>MSELCVGINGFGRIGRLVLRACLQKGIKVTAINDPFIDLQYMVYMFKYDSTHGRYKGEVHMEDGKLIVDGQAISVFQCMKPAEIPWGDAGALYVVESTGVFLSIEKASAHIQGGAKRVVVSAPSPDAPMFVMGVNQDKYDPSSMTIVSNASCTTNCLAPLAKVIHDNFGIEEALMTTVHAYTATQKTVDGPSAKAWRDGRGAHQNIIPASTGAAKAVGKVIPELNGKLTGMAFRVPVADVSVVDLTCRLTRPASYANIKESVKKAAHGPMKGILGYTEDSVVSSDFVGDTHSSIFDAGAGISLNDNFVKLISWYDNEFGYSHRVADLLMYMHSKE</sequence>
<reference evidence="7 9" key="1">
    <citation type="journal article" date="2007" name="Anal. Biochem.">
        <title>Zebrafish GAPDH can be used as a reference gene for expression analysis in cross-subfamily cloned embryos.</title>
        <authorList>
            <person name="Pei D.-S."/>
            <person name="Sun Y.-H."/>
            <person name="Chen S.-P."/>
            <person name="Wang Y.-P."/>
            <person name="Hu W."/>
            <person name="Zhu Z.-Y."/>
        </authorList>
    </citation>
    <scope>NUCLEOTIDE SEQUENCE [MRNA]</scope>
    <source>
        <strain evidence="9">AB</strain>
        <tissue evidence="5">Gastrula</tissue>
    </source>
</reference>
<reference evidence="8" key="2">
    <citation type="submission" date="2007-11" db="EMBL/GenBank/DDBJ databases">
        <authorList>
            <consortium name="NIH - Zebrafish Gene Collection (ZGC) project"/>
        </authorList>
    </citation>
    <scope>NUCLEOTIDE SEQUENCE [LARGE SCALE MRNA]</scope>
    <source>
        <tissue evidence="8">Kidney</tissue>
    </source>
</reference>
<comment type="function">
    <text evidence="1">Glyceraldehyde-3-phosphate dehydrogenase is a key enzyme in glycolysis that catalyzes the first step of the pathway by converting D-glyceraldehyde 3-phosphate (G3P) into 3-phospho-D-glyceroyl phosphate.</text>
</comment>
<comment type="catalytic activity">
    <reaction evidence="2 4">
        <text>D-glyceraldehyde 3-phosphate + phosphate + NAD(+) = (2R)-3-phospho-glyceroyl phosphate + NADH + H(+)</text>
        <dbReference type="Rhea" id="RHEA:10300"/>
        <dbReference type="ChEBI" id="CHEBI:15378"/>
        <dbReference type="ChEBI" id="CHEBI:43474"/>
        <dbReference type="ChEBI" id="CHEBI:57540"/>
        <dbReference type="ChEBI" id="CHEBI:57604"/>
        <dbReference type="ChEBI" id="CHEBI:57945"/>
        <dbReference type="ChEBI" id="CHEBI:59776"/>
        <dbReference type="EC" id="1.2.1.12"/>
    </reaction>
</comment>
<comment type="pathway">
    <text evidence="2">Carbohydrate degradation; glycolysis; pyruvate from D-glyceraldehyde 3-phosphate: step 1/5.</text>
</comment>
<comment type="subunit">
    <text evidence="2">Homotetramer.</text>
</comment>
<comment type="subcellular location">
    <subcellularLocation>
        <location evidence="2">Cytoplasm</location>
    </subcellularLocation>
</comment>
<comment type="similarity">
    <text evidence="3">Belongs to the glyceraldehyde-3-phosphate dehydrogenase family.</text>
</comment>
<proteinExistence type="evidence at transcript level"/>
<gene>
    <name type="primary">gapdh-2</name>
    <name evidence="6" type="synonym">gapdh</name>
    <name type="ORF">zgc:76908</name>
</gene>
<name>G3P2_DANRE</name>
<feature type="chain" id="PRO_0000382470" description="Glyceraldehyde-3-phosphate dehydrogenase 2">
    <location>
        <begin position="1"/>
        <end position="335"/>
    </location>
</feature>
<feature type="active site" description="Nucleophile" evidence="2 4">
    <location>
        <position position="152"/>
    </location>
</feature>
<feature type="binding site" evidence="2">
    <location>
        <begin position="13"/>
        <end position="14"/>
    </location>
    <ligand>
        <name>NAD(+)</name>
        <dbReference type="ChEBI" id="CHEBI:57540"/>
    </ligand>
</feature>
<feature type="binding site" evidence="2">
    <location>
        <position position="34"/>
    </location>
    <ligand>
        <name>NAD(+)</name>
        <dbReference type="ChEBI" id="CHEBI:57540"/>
    </ligand>
</feature>
<feature type="binding site" evidence="2">
    <location>
        <position position="79"/>
    </location>
    <ligand>
        <name>NAD(+)</name>
        <dbReference type="ChEBI" id="CHEBI:57540"/>
    </ligand>
</feature>
<feature type="binding site" evidence="2">
    <location>
        <begin position="151"/>
        <end position="153"/>
    </location>
    <ligand>
        <name>D-glyceraldehyde 3-phosphate</name>
        <dbReference type="ChEBI" id="CHEBI:59776"/>
    </ligand>
</feature>
<feature type="binding site" evidence="2">
    <location>
        <position position="182"/>
    </location>
    <ligand>
        <name>D-glyceraldehyde 3-phosphate</name>
        <dbReference type="ChEBI" id="CHEBI:59776"/>
    </ligand>
</feature>
<feature type="binding site" evidence="2">
    <location>
        <begin position="211"/>
        <end position="212"/>
    </location>
    <ligand>
        <name>D-glyceraldehyde 3-phosphate</name>
        <dbReference type="ChEBI" id="CHEBI:59776"/>
    </ligand>
</feature>
<feature type="binding site" evidence="2">
    <location>
        <position position="234"/>
    </location>
    <ligand>
        <name>D-glyceraldehyde 3-phosphate</name>
        <dbReference type="ChEBI" id="CHEBI:59776"/>
    </ligand>
</feature>
<feature type="binding site" evidence="2">
    <location>
        <position position="316"/>
    </location>
    <ligand>
        <name>NAD(+)</name>
        <dbReference type="ChEBI" id="CHEBI:57540"/>
    </ligand>
</feature>
<feature type="site" description="Activates thiol group during catalysis" evidence="2">
    <location>
        <position position="179"/>
    </location>
</feature>
<organism>
    <name type="scientific">Danio rerio</name>
    <name type="common">Zebrafish</name>
    <name type="synonym">Brachydanio rerio</name>
    <dbReference type="NCBI Taxonomy" id="7955"/>
    <lineage>
        <taxon>Eukaryota</taxon>
        <taxon>Metazoa</taxon>
        <taxon>Chordata</taxon>
        <taxon>Craniata</taxon>
        <taxon>Vertebrata</taxon>
        <taxon>Euteleostomi</taxon>
        <taxon>Actinopterygii</taxon>
        <taxon>Neopterygii</taxon>
        <taxon>Teleostei</taxon>
        <taxon>Ostariophysi</taxon>
        <taxon>Cypriniformes</taxon>
        <taxon>Danionidae</taxon>
        <taxon>Danioninae</taxon>
        <taxon>Danio</taxon>
    </lineage>
</organism>
<keyword id="KW-0963">Cytoplasm</keyword>
<keyword id="KW-0324">Glycolysis</keyword>
<keyword id="KW-0520">NAD</keyword>
<keyword id="KW-0560">Oxidoreductase</keyword>
<keyword id="KW-1185">Reference proteome</keyword>
<evidence type="ECO:0000250" key="1"/>
<evidence type="ECO:0000250" key="2">
    <source>
        <dbReference type="UniProtKB" id="Q64467"/>
    </source>
</evidence>
<evidence type="ECO:0000255" key="3"/>
<evidence type="ECO:0000255" key="4">
    <source>
        <dbReference type="PROSITE-ProRule" id="PRU10009"/>
    </source>
</evidence>
<evidence type="ECO:0000269" key="5">
    <source>
    </source>
</evidence>
<evidence type="ECO:0000303" key="6">
    <source>
    </source>
</evidence>
<evidence type="ECO:0000305" key="7"/>
<evidence type="ECO:0000312" key="8">
    <source>
        <dbReference type="EMBL" id="AAI54823.1"/>
    </source>
</evidence>
<evidence type="ECO:0000312" key="9">
    <source>
        <dbReference type="EMBL" id="AAW28030.1"/>
    </source>
</evidence>
<protein>
    <recommendedName>
        <fullName>Glyceraldehyde-3-phosphate dehydrogenase 2</fullName>
        <ecNumber>1.2.1.12</ecNumber>
    </recommendedName>
</protein>
<dbReference type="EC" id="1.2.1.12"/>
<dbReference type="EMBL" id="AY818346">
    <property type="protein sequence ID" value="AAW28030.1"/>
    <property type="molecule type" value="mRNA"/>
</dbReference>
<dbReference type="EMBL" id="BC154822">
    <property type="protein sequence ID" value="AAI54823.1"/>
    <property type="molecule type" value="mRNA"/>
</dbReference>
<dbReference type="SMR" id="Q5MJ86"/>
<dbReference type="FunCoup" id="Q5MJ86">
    <property type="interactions" value="449"/>
</dbReference>
<dbReference type="STRING" id="7955.ENSDARP00000058383"/>
<dbReference type="PaxDb" id="7955-ENSDARP00000058383"/>
<dbReference type="GeneID" id="406367"/>
<dbReference type="KEGG" id="dre:406367"/>
<dbReference type="AGR" id="ZFIN:ZDB-GENE-020913-1"/>
<dbReference type="CTD" id="26330"/>
<dbReference type="ZFIN" id="ZDB-GENE-020913-1">
    <property type="gene designation" value="gapdhs"/>
</dbReference>
<dbReference type="eggNOG" id="KOG0657">
    <property type="taxonomic scope" value="Eukaryota"/>
</dbReference>
<dbReference type="InParanoid" id="Q5MJ86"/>
<dbReference type="OrthoDB" id="1152826at2759"/>
<dbReference type="PhylomeDB" id="Q5MJ86"/>
<dbReference type="Reactome" id="R-DRE-70171">
    <property type="pathway name" value="Glycolysis"/>
</dbReference>
<dbReference type="Reactome" id="R-DRE-70263">
    <property type="pathway name" value="Gluconeogenesis"/>
</dbReference>
<dbReference type="UniPathway" id="UPA00109">
    <property type="reaction ID" value="UER00184"/>
</dbReference>
<dbReference type="PRO" id="PR:Q5MJ86"/>
<dbReference type="Proteomes" id="UP000000437">
    <property type="component" value="Chromosome 16"/>
</dbReference>
<dbReference type="GO" id="GO:0005829">
    <property type="term" value="C:cytosol"/>
    <property type="evidence" value="ECO:0000318"/>
    <property type="project" value="GO_Central"/>
</dbReference>
<dbReference type="GO" id="GO:0004365">
    <property type="term" value="F:glyceraldehyde-3-phosphate dehydrogenase (NAD+) (phosphorylating) activity"/>
    <property type="evidence" value="ECO:0000318"/>
    <property type="project" value="GO_Central"/>
</dbReference>
<dbReference type="GO" id="GO:0051287">
    <property type="term" value="F:NAD binding"/>
    <property type="evidence" value="ECO:0007669"/>
    <property type="project" value="InterPro"/>
</dbReference>
<dbReference type="GO" id="GO:0050661">
    <property type="term" value="F:NADP binding"/>
    <property type="evidence" value="ECO:0007669"/>
    <property type="project" value="InterPro"/>
</dbReference>
<dbReference type="GO" id="GO:0006006">
    <property type="term" value="P:glucose metabolic process"/>
    <property type="evidence" value="ECO:0007669"/>
    <property type="project" value="InterPro"/>
</dbReference>
<dbReference type="GO" id="GO:0006096">
    <property type="term" value="P:glycolytic process"/>
    <property type="evidence" value="ECO:0000318"/>
    <property type="project" value="GO_Central"/>
</dbReference>
<dbReference type="CDD" id="cd18126">
    <property type="entry name" value="GAPDH_I_C"/>
    <property type="match status" value="1"/>
</dbReference>
<dbReference type="CDD" id="cd05214">
    <property type="entry name" value="GAPDH_I_N"/>
    <property type="match status" value="1"/>
</dbReference>
<dbReference type="FunFam" id="3.30.360.10:FF:000001">
    <property type="entry name" value="Glyceraldehyde-3-phosphate dehydrogenase"/>
    <property type="match status" value="1"/>
</dbReference>
<dbReference type="FunFam" id="3.40.50.720:FF:000020">
    <property type="entry name" value="Glyceraldehyde-3-phosphate dehydrogenase"/>
    <property type="match status" value="1"/>
</dbReference>
<dbReference type="Gene3D" id="3.30.360.10">
    <property type="entry name" value="Dihydrodipicolinate Reductase, domain 2"/>
    <property type="match status" value="1"/>
</dbReference>
<dbReference type="Gene3D" id="3.40.50.720">
    <property type="entry name" value="NAD(P)-binding Rossmann-like Domain"/>
    <property type="match status" value="1"/>
</dbReference>
<dbReference type="InterPro" id="IPR020831">
    <property type="entry name" value="GlycerAld/Erythrose_P_DH"/>
</dbReference>
<dbReference type="InterPro" id="IPR020830">
    <property type="entry name" value="GlycerAld_3-P_DH_AS"/>
</dbReference>
<dbReference type="InterPro" id="IPR020829">
    <property type="entry name" value="GlycerAld_3-P_DH_cat"/>
</dbReference>
<dbReference type="InterPro" id="IPR020828">
    <property type="entry name" value="GlycerAld_3-P_DH_NAD(P)-bd"/>
</dbReference>
<dbReference type="InterPro" id="IPR006424">
    <property type="entry name" value="Glyceraldehyde-3-P_DH_1"/>
</dbReference>
<dbReference type="InterPro" id="IPR036291">
    <property type="entry name" value="NAD(P)-bd_dom_sf"/>
</dbReference>
<dbReference type="NCBIfam" id="TIGR01534">
    <property type="entry name" value="GAPDH-I"/>
    <property type="match status" value="1"/>
</dbReference>
<dbReference type="PANTHER" id="PTHR10836">
    <property type="entry name" value="GLYCERALDEHYDE 3-PHOSPHATE DEHYDROGENASE"/>
    <property type="match status" value="1"/>
</dbReference>
<dbReference type="PANTHER" id="PTHR10836:SF79">
    <property type="entry name" value="GLYCERALDEHYDE-3-PHOSPHATE DEHYDROGENASE, TESTIS-SPECIFIC"/>
    <property type="match status" value="1"/>
</dbReference>
<dbReference type="Pfam" id="PF02800">
    <property type="entry name" value="Gp_dh_C"/>
    <property type="match status" value="1"/>
</dbReference>
<dbReference type="Pfam" id="PF00044">
    <property type="entry name" value="Gp_dh_N"/>
    <property type="match status" value="1"/>
</dbReference>
<dbReference type="PIRSF" id="PIRSF000149">
    <property type="entry name" value="GAP_DH"/>
    <property type="match status" value="1"/>
</dbReference>
<dbReference type="PRINTS" id="PR00078">
    <property type="entry name" value="G3PDHDRGNASE"/>
</dbReference>
<dbReference type="SMART" id="SM00846">
    <property type="entry name" value="Gp_dh_N"/>
    <property type="match status" value="1"/>
</dbReference>
<dbReference type="SUPFAM" id="SSF55347">
    <property type="entry name" value="Glyceraldehyde-3-phosphate dehydrogenase-like, C-terminal domain"/>
    <property type="match status" value="1"/>
</dbReference>
<dbReference type="SUPFAM" id="SSF51735">
    <property type="entry name" value="NAD(P)-binding Rossmann-fold domains"/>
    <property type="match status" value="1"/>
</dbReference>
<dbReference type="PROSITE" id="PS00071">
    <property type="entry name" value="GAPDH"/>
    <property type="match status" value="1"/>
</dbReference>
<accession>Q5MJ86</accession>